<keyword id="KW-1185">Reference proteome</keyword>
<organism>
    <name type="scientific">Methanopyrus kandleri (strain AV19 / DSM 6324 / JCM 9639 / NBRC 100938)</name>
    <dbReference type="NCBI Taxonomy" id="190192"/>
    <lineage>
        <taxon>Archaea</taxon>
        <taxon>Methanobacteriati</taxon>
        <taxon>Methanobacteriota</taxon>
        <taxon>Methanomada group</taxon>
        <taxon>Methanopyri</taxon>
        <taxon>Methanopyrales</taxon>
        <taxon>Methanopyraceae</taxon>
        <taxon>Methanopyrus</taxon>
    </lineage>
</organism>
<evidence type="ECO:0000255" key="1">
    <source>
        <dbReference type="HAMAP-Rule" id="MF_00634"/>
    </source>
</evidence>
<comment type="similarity">
    <text evidence="1">Belongs to the UPF0235 family.</text>
</comment>
<feature type="chain" id="PRO_0000139469" description="UPF0235 protein MK0273">
    <location>
        <begin position="1"/>
        <end position="96"/>
    </location>
</feature>
<sequence length="96" mass="10764">MESPVKEHREGTLIRVRVNPDADTTDLKGVDEWRGVLEVDVAAPPVKGKANRELLEFLGRKLNTTCELVSGEKSREKLVLARDVSVDEVKERLGLR</sequence>
<protein>
    <recommendedName>
        <fullName evidence="1">UPF0235 protein MK0273</fullName>
    </recommendedName>
</protein>
<reference key="1">
    <citation type="journal article" date="2002" name="Proc. Natl. Acad. Sci. U.S.A.">
        <title>The complete genome of hyperthermophile Methanopyrus kandleri AV19 and monophyly of archaeal methanogens.</title>
        <authorList>
            <person name="Slesarev A.I."/>
            <person name="Mezhevaya K.V."/>
            <person name="Makarova K.S."/>
            <person name="Polushin N.N."/>
            <person name="Shcherbinina O.V."/>
            <person name="Shakhova V.V."/>
            <person name="Belova G.I."/>
            <person name="Aravind L."/>
            <person name="Natale D.A."/>
            <person name="Rogozin I.B."/>
            <person name="Tatusov R.L."/>
            <person name="Wolf Y.I."/>
            <person name="Stetter K.O."/>
            <person name="Malykh A.G."/>
            <person name="Koonin E.V."/>
            <person name="Kozyavkin S.A."/>
        </authorList>
    </citation>
    <scope>NUCLEOTIDE SEQUENCE [LARGE SCALE GENOMIC DNA]</scope>
    <source>
        <strain>AV19 / DSM 6324 / JCM 9639 / NBRC 100938</strain>
    </source>
</reference>
<proteinExistence type="inferred from homology"/>
<name>Y273_METKA</name>
<dbReference type="EMBL" id="AE009439">
    <property type="protein sequence ID" value="AAM01490.1"/>
    <property type="molecule type" value="Genomic_DNA"/>
</dbReference>
<dbReference type="RefSeq" id="WP_011018645.1">
    <property type="nucleotide sequence ID" value="NC_003551.1"/>
</dbReference>
<dbReference type="SMR" id="Q8TYM3"/>
<dbReference type="FunCoup" id="Q8TYM3">
    <property type="interactions" value="4"/>
</dbReference>
<dbReference type="PaxDb" id="190192-MK0273"/>
<dbReference type="EnsemblBacteria" id="AAM01490">
    <property type="protein sequence ID" value="AAM01490"/>
    <property type="gene ID" value="MK0273"/>
</dbReference>
<dbReference type="GeneID" id="1477576"/>
<dbReference type="KEGG" id="mka:MK0273"/>
<dbReference type="PATRIC" id="fig|190192.8.peg.276"/>
<dbReference type="HOGENOM" id="CLU_130694_6_1_2"/>
<dbReference type="InParanoid" id="Q8TYM3"/>
<dbReference type="OrthoDB" id="53248at2157"/>
<dbReference type="Proteomes" id="UP000001826">
    <property type="component" value="Chromosome"/>
</dbReference>
<dbReference type="GO" id="GO:0005737">
    <property type="term" value="C:cytoplasm"/>
    <property type="evidence" value="ECO:0007669"/>
    <property type="project" value="TreeGrafter"/>
</dbReference>
<dbReference type="Gene3D" id="3.30.1200.10">
    <property type="entry name" value="YggU-like"/>
    <property type="match status" value="1"/>
</dbReference>
<dbReference type="HAMAP" id="MF_00634">
    <property type="entry name" value="UPF0235"/>
    <property type="match status" value="1"/>
</dbReference>
<dbReference type="InterPro" id="IPR003746">
    <property type="entry name" value="DUF167"/>
</dbReference>
<dbReference type="InterPro" id="IPR036591">
    <property type="entry name" value="YggU-like_sf"/>
</dbReference>
<dbReference type="NCBIfam" id="TIGR00251">
    <property type="entry name" value="DUF167 family protein"/>
    <property type="match status" value="1"/>
</dbReference>
<dbReference type="PANTHER" id="PTHR13420">
    <property type="entry name" value="UPF0235 PROTEIN C15ORF40"/>
    <property type="match status" value="1"/>
</dbReference>
<dbReference type="PANTHER" id="PTHR13420:SF7">
    <property type="entry name" value="UPF0235 PROTEIN C15ORF40"/>
    <property type="match status" value="1"/>
</dbReference>
<dbReference type="Pfam" id="PF02594">
    <property type="entry name" value="DUF167"/>
    <property type="match status" value="1"/>
</dbReference>
<dbReference type="SMART" id="SM01152">
    <property type="entry name" value="DUF167"/>
    <property type="match status" value="1"/>
</dbReference>
<dbReference type="SUPFAM" id="SSF69786">
    <property type="entry name" value="YggU-like"/>
    <property type="match status" value="1"/>
</dbReference>
<accession>Q8TYM3</accession>
<gene>
    <name type="ordered locus">MK0273</name>
</gene>